<organism>
    <name type="scientific">Chlamydia muridarum (strain MoPn / Nigg)</name>
    <dbReference type="NCBI Taxonomy" id="243161"/>
    <lineage>
        <taxon>Bacteria</taxon>
        <taxon>Pseudomonadati</taxon>
        <taxon>Chlamydiota</taxon>
        <taxon>Chlamydiia</taxon>
        <taxon>Chlamydiales</taxon>
        <taxon>Chlamydiaceae</taxon>
        <taxon>Chlamydia/Chlamydophila group</taxon>
        <taxon>Chlamydia</taxon>
    </lineage>
</organism>
<keyword id="KW-0997">Cell inner membrane</keyword>
<keyword id="KW-1003">Cell membrane</keyword>
<keyword id="KW-0378">Hydrolase</keyword>
<keyword id="KW-0464">Manganese</keyword>
<keyword id="KW-0472">Membrane</keyword>
<keyword id="KW-0479">Metal-binding</keyword>
<keyword id="KW-0812">Transmembrane</keyword>
<keyword id="KW-1133">Transmembrane helix</keyword>
<comment type="function">
    <text evidence="2">Hydrolyzes the pyrophosphate bond of UDP-2,3-diacylglucosamine to form 2,3-diacylglucosamine 1-phosphate (lipid X) and UMP by catalyzing the attack of water at the alpha-P atom. Involved in the biosynthesis of lipid A, a phosphorylated glycolipid that anchors the lipooligosaccharide (LOS) to the outer membrane of the cell.</text>
</comment>
<comment type="catalytic activity">
    <reaction evidence="2">
        <text>UDP-2,3-diacyl-alpha-D-glucosamine + H2O = 2,3-diacyl-alpha-D-glucosaminyl 1-phosphate + UMP + 2 H(+)</text>
        <dbReference type="Rhea" id="RHEA:53328"/>
        <dbReference type="ChEBI" id="CHEBI:15377"/>
        <dbReference type="ChEBI" id="CHEBI:15378"/>
        <dbReference type="ChEBI" id="CHEBI:57865"/>
        <dbReference type="ChEBI" id="CHEBI:137179"/>
        <dbReference type="ChEBI" id="CHEBI:137180"/>
    </reaction>
</comment>
<comment type="cofactor">
    <cofactor evidence="2">
        <name>Mn(2+)</name>
        <dbReference type="ChEBI" id="CHEBI:29035"/>
    </cofactor>
    <text evidence="1">Binds 2 divalent metal cations.</text>
</comment>
<comment type="pathway">
    <text evidence="2">Glycolipid biosynthesis; lipid IV(A) biosynthesis.</text>
</comment>
<comment type="subcellular location">
    <subcellularLocation>
        <location evidence="2">Cell inner membrane</location>
        <topology evidence="3">Single-pass membrane protein</topology>
        <orientation evidence="2">Cytoplasmic side</orientation>
    </subcellularLocation>
</comment>
<comment type="similarity">
    <text evidence="4">Belongs to the metallophosphoesterase superfamily.</text>
</comment>
<proteinExistence type="inferred from homology"/>
<feature type="chain" id="PRO_0000019222" description="UDP-2,3-diacylglucosamine pyrophosphatase LpxG">
    <location>
        <begin position="1"/>
        <end position="329"/>
    </location>
</feature>
<feature type="transmembrane region" description="Helical" evidence="3">
    <location>
        <begin position="2"/>
        <end position="24"/>
    </location>
</feature>
<feature type="binding site" evidence="1">
    <location>
        <position position="59"/>
    </location>
    <ligand>
        <name>a divalent metal cation</name>
        <dbReference type="ChEBI" id="CHEBI:60240"/>
        <label>1</label>
    </ligand>
</feature>
<feature type="binding site" evidence="1">
    <location>
        <position position="61"/>
    </location>
    <ligand>
        <name>a divalent metal cation</name>
        <dbReference type="ChEBI" id="CHEBI:60240"/>
        <label>1</label>
    </ligand>
</feature>
<feature type="binding site" evidence="1">
    <location>
        <position position="91"/>
    </location>
    <ligand>
        <name>a divalent metal cation</name>
        <dbReference type="ChEBI" id="CHEBI:60240"/>
        <label>1</label>
    </ligand>
</feature>
<feature type="binding site" evidence="1">
    <location>
        <position position="91"/>
    </location>
    <ligand>
        <name>a divalent metal cation</name>
        <dbReference type="ChEBI" id="CHEBI:60240"/>
        <label>2</label>
    </ligand>
</feature>
<feature type="binding site" evidence="1">
    <location>
        <position position="123"/>
    </location>
    <ligand>
        <name>a divalent metal cation</name>
        <dbReference type="ChEBI" id="CHEBI:60240"/>
        <label>2</label>
    </ligand>
</feature>
<feature type="binding site" evidence="1">
    <location>
        <position position="257"/>
    </location>
    <ligand>
        <name>a divalent metal cation</name>
        <dbReference type="ChEBI" id="CHEBI:60240"/>
        <label>2</label>
    </ligand>
</feature>
<feature type="binding site" evidence="1">
    <location>
        <position position="259"/>
    </location>
    <ligand>
        <name>a divalent metal cation</name>
        <dbReference type="ChEBI" id="CHEBI:60240"/>
        <label>1</label>
    </ligand>
</feature>
<name>LPXG_CHLMU</name>
<accession>Q9PJT2</accession>
<sequence length="329" mass="37109">MFVFVGSTVSLTAIVAAPVLTWIWANHLEPNLLKLTRLDWRLPKKFAHLHGLRIVQISDLHLNQSTPDAFLKKISRKVSSLSPDMLVFTGDFICRAKVESSNKLKNFLCSLNAPLGCFACLGNHDYATYVSRDIHGKINTIPETSSRPLRRALTSVYQSLFSSSHNEFAEEFTPQDPNPHLLSILHNTPFQLLHNQSVTLSDVVNIVGLGDFFAKQFDPKKAFTNYNPTLPGIILSHNPDTIHYLKDYPGDVVFSGHSHGPQISLPWPKFANTITNKLSGLENPELARGLFSFPQEKRLLYVNRGLGGWKRIRFFSPPEICIMRCLYEP</sequence>
<protein>
    <recommendedName>
        <fullName evidence="2">UDP-2,3-diacylglucosamine pyrophosphatase LpxG</fullName>
        <shortName evidence="2">UDP-DAGn pyrophosphatase</shortName>
        <ecNumber evidence="2">3.6.1.-</ecNumber>
    </recommendedName>
    <alternativeName>
        <fullName evidence="2">UDP-2,3-diacylglucosamine hydrolase LpxG</fullName>
        <shortName evidence="2">UDP-DAGn hydrolase</shortName>
    </alternativeName>
</protein>
<dbReference type="EC" id="3.6.1.-" evidence="2"/>
<dbReference type="EMBL" id="AE002160">
    <property type="protein sequence ID" value="AAF39553.1"/>
    <property type="molecule type" value="Genomic_DNA"/>
</dbReference>
<dbReference type="PIR" id="B81669">
    <property type="entry name" value="B81669"/>
</dbReference>
<dbReference type="RefSeq" id="WP_010231421.1">
    <property type="nucleotide sequence ID" value="NZ_CP027217.1"/>
</dbReference>
<dbReference type="GeneID" id="1246109"/>
<dbReference type="KEGG" id="cmu:TC_0746"/>
<dbReference type="eggNOG" id="COG1408">
    <property type="taxonomic scope" value="Bacteria"/>
</dbReference>
<dbReference type="HOGENOM" id="CLU_025443_3_2_0"/>
<dbReference type="OrthoDB" id="9780884at2"/>
<dbReference type="UniPathway" id="UPA00359"/>
<dbReference type="Proteomes" id="UP000000800">
    <property type="component" value="Chromosome"/>
</dbReference>
<dbReference type="GO" id="GO:0005886">
    <property type="term" value="C:plasma membrane"/>
    <property type="evidence" value="ECO:0007669"/>
    <property type="project" value="UniProtKB-SubCell"/>
</dbReference>
<dbReference type="GO" id="GO:0046872">
    <property type="term" value="F:metal ion binding"/>
    <property type="evidence" value="ECO:0007669"/>
    <property type="project" value="UniProtKB-KW"/>
</dbReference>
<dbReference type="GO" id="GO:0008758">
    <property type="term" value="F:UDP-2,3-diacylglucosamine hydrolase activity"/>
    <property type="evidence" value="ECO:0007669"/>
    <property type="project" value="TreeGrafter"/>
</dbReference>
<dbReference type="GO" id="GO:0009245">
    <property type="term" value="P:lipid A biosynthetic process"/>
    <property type="evidence" value="ECO:0007669"/>
    <property type="project" value="TreeGrafter"/>
</dbReference>
<dbReference type="CDD" id="cd07385">
    <property type="entry name" value="MPP_YkuE_C"/>
    <property type="match status" value="1"/>
</dbReference>
<dbReference type="Gene3D" id="3.60.21.10">
    <property type="match status" value="1"/>
</dbReference>
<dbReference type="InterPro" id="IPR004843">
    <property type="entry name" value="Calcineurin-like_PHP_ApaH"/>
</dbReference>
<dbReference type="InterPro" id="IPR029052">
    <property type="entry name" value="Metallo-depent_PP-like"/>
</dbReference>
<dbReference type="InterPro" id="IPR051158">
    <property type="entry name" value="Metallophosphoesterase_sf"/>
</dbReference>
<dbReference type="NCBIfam" id="NF033458">
    <property type="entry name" value="lipid_A_LpxG"/>
    <property type="match status" value="1"/>
</dbReference>
<dbReference type="PANTHER" id="PTHR31302:SF31">
    <property type="entry name" value="PHOSPHODIESTERASE YAEI"/>
    <property type="match status" value="1"/>
</dbReference>
<dbReference type="PANTHER" id="PTHR31302">
    <property type="entry name" value="TRANSMEMBRANE PROTEIN WITH METALLOPHOSPHOESTERASE DOMAIN-RELATED"/>
    <property type="match status" value="1"/>
</dbReference>
<dbReference type="Pfam" id="PF00149">
    <property type="entry name" value="Metallophos"/>
    <property type="match status" value="1"/>
</dbReference>
<dbReference type="SUPFAM" id="SSF56300">
    <property type="entry name" value="Metallo-dependent phosphatases"/>
    <property type="match status" value="1"/>
</dbReference>
<reference key="1">
    <citation type="journal article" date="2000" name="Nucleic Acids Res.">
        <title>Genome sequences of Chlamydia trachomatis MoPn and Chlamydia pneumoniae AR39.</title>
        <authorList>
            <person name="Read T.D."/>
            <person name="Brunham R.C."/>
            <person name="Shen C."/>
            <person name="Gill S.R."/>
            <person name="Heidelberg J.F."/>
            <person name="White O."/>
            <person name="Hickey E.K."/>
            <person name="Peterson J.D."/>
            <person name="Utterback T.R."/>
            <person name="Berry K.J."/>
            <person name="Bass S."/>
            <person name="Linher K.D."/>
            <person name="Weidman J.F."/>
            <person name="Khouri H.M."/>
            <person name="Craven B."/>
            <person name="Bowman C."/>
            <person name="Dodson R.J."/>
            <person name="Gwinn M.L."/>
            <person name="Nelson W.C."/>
            <person name="DeBoy R.T."/>
            <person name="Kolonay J.F."/>
            <person name="McClarty G."/>
            <person name="Salzberg S.L."/>
            <person name="Eisen J.A."/>
            <person name="Fraser C.M."/>
        </authorList>
    </citation>
    <scope>NUCLEOTIDE SEQUENCE [LARGE SCALE GENOMIC DNA]</scope>
    <source>
        <strain>MoPn / Nigg</strain>
    </source>
</reference>
<evidence type="ECO:0000250" key="1"/>
<evidence type="ECO:0000250" key="2">
    <source>
        <dbReference type="UniProtKB" id="O84467"/>
    </source>
</evidence>
<evidence type="ECO:0000255" key="3"/>
<evidence type="ECO:0000305" key="4"/>
<gene>
    <name evidence="2" type="primary">lpxG</name>
    <name type="ordered locus">TC_0746</name>
</gene>